<name>NUOH_PSEPK</name>
<evidence type="ECO:0000255" key="1">
    <source>
        <dbReference type="HAMAP-Rule" id="MF_01350"/>
    </source>
</evidence>
<comment type="function">
    <text evidence="1">NDH-1 shuttles electrons from NADH, via FMN and iron-sulfur (Fe-S) centers, to quinones in the respiratory chain. The immediate electron acceptor for the enzyme in this species is believed to be ubiquinone. Couples the redox reaction to proton translocation (for every two electrons transferred, four hydrogen ions are translocated across the cytoplasmic membrane), and thus conserves the redox energy in a proton gradient. This subunit may bind ubiquinone.</text>
</comment>
<comment type="catalytic activity">
    <reaction evidence="1">
        <text>a quinone + NADH + 5 H(+)(in) = a quinol + NAD(+) + 4 H(+)(out)</text>
        <dbReference type="Rhea" id="RHEA:57888"/>
        <dbReference type="ChEBI" id="CHEBI:15378"/>
        <dbReference type="ChEBI" id="CHEBI:24646"/>
        <dbReference type="ChEBI" id="CHEBI:57540"/>
        <dbReference type="ChEBI" id="CHEBI:57945"/>
        <dbReference type="ChEBI" id="CHEBI:132124"/>
    </reaction>
</comment>
<comment type="subunit">
    <text evidence="1">NDH-1 is composed of 13 different subunits. Subunits NuoA, H, J, K, L, M, N constitute the membrane sector of the complex.</text>
</comment>
<comment type="subcellular location">
    <subcellularLocation>
        <location evidence="1">Cell inner membrane</location>
        <topology evidence="1">Multi-pass membrane protein</topology>
    </subcellularLocation>
</comment>
<comment type="similarity">
    <text evidence="1">Belongs to the complex I subunit 1 family.</text>
</comment>
<dbReference type="EC" id="7.1.1.-" evidence="1"/>
<dbReference type="EMBL" id="AE015451">
    <property type="protein sequence ID" value="AAN69708.1"/>
    <property type="molecule type" value="Genomic_DNA"/>
</dbReference>
<dbReference type="RefSeq" id="NP_746244.1">
    <property type="nucleotide sequence ID" value="NC_002947.4"/>
</dbReference>
<dbReference type="RefSeq" id="WP_003251440.1">
    <property type="nucleotide sequence ID" value="NZ_CP169744.1"/>
</dbReference>
<dbReference type="SMR" id="Q88FH1"/>
<dbReference type="STRING" id="160488.PP_4125"/>
<dbReference type="PaxDb" id="160488-PP_4125"/>
<dbReference type="GeneID" id="97169076"/>
<dbReference type="KEGG" id="ppu:PP_4125"/>
<dbReference type="PATRIC" id="fig|160488.4.peg.4384"/>
<dbReference type="eggNOG" id="COG1005">
    <property type="taxonomic scope" value="Bacteria"/>
</dbReference>
<dbReference type="HOGENOM" id="CLU_015134_0_1_6"/>
<dbReference type="OrthoDB" id="9803734at2"/>
<dbReference type="PhylomeDB" id="Q88FH1"/>
<dbReference type="BioCyc" id="MetaCyc:G1G01-4392-MONOMER"/>
<dbReference type="BioCyc" id="PPUT160488:G1G01-4392-MONOMER"/>
<dbReference type="Proteomes" id="UP000000556">
    <property type="component" value="Chromosome"/>
</dbReference>
<dbReference type="GO" id="GO:0005886">
    <property type="term" value="C:plasma membrane"/>
    <property type="evidence" value="ECO:0007669"/>
    <property type="project" value="UniProtKB-SubCell"/>
</dbReference>
<dbReference type="GO" id="GO:0003954">
    <property type="term" value="F:NADH dehydrogenase activity"/>
    <property type="evidence" value="ECO:0007669"/>
    <property type="project" value="TreeGrafter"/>
</dbReference>
<dbReference type="GO" id="GO:0016655">
    <property type="term" value="F:oxidoreductase activity, acting on NAD(P)H, quinone or similar compound as acceptor"/>
    <property type="evidence" value="ECO:0007669"/>
    <property type="project" value="UniProtKB-UniRule"/>
</dbReference>
<dbReference type="GO" id="GO:0048038">
    <property type="term" value="F:quinone binding"/>
    <property type="evidence" value="ECO:0007669"/>
    <property type="project" value="UniProtKB-KW"/>
</dbReference>
<dbReference type="GO" id="GO:0009060">
    <property type="term" value="P:aerobic respiration"/>
    <property type="evidence" value="ECO:0007669"/>
    <property type="project" value="TreeGrafter"/>
</dbReference>
<dbReference type="HAMAP" id="MF_01350">
    <property type="entry name" value="NDH1_NuoH"/>
    <property type="match status" value="1"/>
</dbReference>
<dbReference type="InterPro" id="IPR001694">
    <property type="entry name" value="NADH_UbQ_OxRdtase_su1/FPO"/>
</dbReference>
<dbReference type="InterPro" id="IPR018086">
    <property type="entry name" value="NADH_UbQ_OxRdtase_su1_CS"/>
</dbReference>
<dbReference type="NCBIfam" id="NF004740">
    <property type="entry name" value="PRK06076.1-1"/>
    <property type="match status" value="1"/>
</dbReference>
<dbReference type="NCBIfam" id="NF004741">
    <property type="entry name" value="PRK06076.1-2"/>
    <property type="match status" value="1"/>
</dbReference>
<dbReference type="PANTHER" id="PTHR11432">
    <property type="entry name" value="NADH DEHYDROGENASE SUBUNIT 1"/>
    <property type="match status" value="1"/>
</dbReference>
<dbReference type="PANTHER" id="PTHR11432:SF3">
    <property type="entry name" value="NADH-UBIQUINONE OXIDOREDUCTASE CHAIN 1"/>
    <property type="match status" value="1"/>
</dbReference>
<dbReference type="Pfam" id="PF00146">
    <property type="entry name" value="NADHdh"/>
    <property type="match status" value="1"/>
</dbReference>
<dbReference type="PROSITE" id="PS00667">
    <property type="entry name" value="COMPLEX1_ND1_1"/>
    <property type="match status" value="1"/>
</dbReference>
<dbReference type="PROSITE" id="PS00668">
    <property type="entry name" value="COMPLEX1_ND1_2"/>
    <property type="match status" value="1"/>
</dbReference>
<protein>
    <recommendedName>
        <fullName evidence="1">NADH-quinone oxidoreductase subunit H</fullName>
        <ecNumber evidence="1">7.1.1.-</ecNumber>
    </recommendedName>
    <alternativeName>
        <fullName evidence="1">NADH dehydrogenase I subunit H</fullName>
    </alternativeName>
    <alternativeName>
        <fullName evidence="1">NDH-1 subunit H</fullName>
    </alternativeName>
</protein>
<sequence>MSWFTPEVIDVILTVLRAIVVLLAVVVCGALLSFVERRLLGWWQDRYGPNRVGPFGMFQIAADMLKMFFKEDWNPPFVDRVIFTLAPVVAMSALLIAFVVIPITPTWGVADLNIGLLFFFAMAGLSVYAVLFAGWSSNNKYALLGSLRASAQTVSYEVFLGLALMGVVVQVGSFNMRDIVEYQAQNLWFIIPQFFGFCTFFIAGVAVTHRHPFDQPEAEQELADGYHIEYAGMKWGMFFVGEYIGIILISALLVTLFFGGWHGPFGILPQLSFLWFALKTAFFIMLFILLRASIPRPRYDQVMDFSWKFCLPLTLINLLVTAAIVLYNTPAVAAQ</sequence>
<accession>Q88FH1</accession>
<proteinExistence type="inferred from homology"/>
<organism>
    <name type="scientific">Pseudomonas putida (strain ATCC 47054 / DSM 6125 / CFBP 8728 / NCIMB 11950 / KT2440)</name>
    <dbReference type="NCBI Taxonomy" id="160488"/>
    <lineage>
        <taxon>Bacteria</taxon>
        <taxon>Pseudomonadati</taxon>
        <taxon>Pseudomonadota</taxon>
        <taxon>Gammaproteobacteria</taxon>
        <taxon>Pseudomonadales</taxon>
        <taxon>Pseudomonadaceae</taxon>
        <taxon>Pseudomonas</taxon>
    </lineage>
</organism>
<feature type="chain" id="PRO_0000240100" description="NADH-quinone oxidoreductase subunit H">
    <location>
        <begin position="1"/>
        <end position="335"/>
    </location>
</feature>
<feature type="transmembrane region" description="Helical" evidence="1">
    <location>
        <begin position="11"/>
        <end position="31"/>
    </location>
</feature>
<feature type="transmembrane region" description="Helical" evidence="1">
    <location>
        <begin position="81"/>
        <end position="101"/>
    </location>
</feature>
<feature type="transmembrane region" description="Helical" evidence="1">
    <location>
        <begin position="114"/>
        <end position="134"/>
    </location>
</feature>
<feature type="transmembrane region" description="Helical" evidence="1">
    <location>
        <begin position="154"/>
        <end position="174"/>
    </location>
</feature>
<feature type="transmembrane region" description="Helical" evidence="1">
    <location>
        <begin position="187"/>
        <end position="207"/>
    </location>
</feature>
<feature type="transmembrane region" description="Helical" evidence="1">
    <location>
        <begin position="238"/>
        <end position="258"/>
    </location>
</feature>
<feature type="transmembrane region" description="Helical" evidence="1">
    <location>
        <begin position="270"/>
        <end position="290"/>
    </location>
</feature>
<feature type="transmembrane region" description="Helical" evidence="1">
    <location>
        <begin position="307"/>
        <end position="327"/>
    </location>
</feature>
<keyword id="KW-0997">Cell inner membrane</keyword>
<keyword id="KW-1003">Cell membrane</keyword>
<keyword id="KW-0472">Membrane</keyword>
<keyword id="KW-0520">NAD</keyword>
<keyword id="KW-0874">Quinone</keyword>
<keyword id="KW-1185">Reference proteome</keyword>
<keyword id="KW-1278">Translocase</keyword>
<keyword id="KW-0812">Transmembrane</keyword>
<keyword id="KW-1133">Transmembrane helix</keyword>
<keyword id="KW-0830">Ubiquinone</keyword>
<reference key="1">
    <citation type="journal article" date="2002" name="Environ. Microbiol.">
        <title>Complete genome sequence and comparative analysis of the metabolically versatile Pseudomonas putida KT2440.</title>
        <authorList>
            <person name="Nelson K.E."/>
            <person name="Weinel C."/>
            <person name="Paulsen I.T."/>
            <person name="Dodson R.J."/>
            <person name="Hilbert H."/>
            <person name="Martins dos Santos V.A.P."/>
            <person name="Fouts D.E."/>
            <person name="Gill S.R."/>
            <person name="Pop M."/>
            <person name="Holmes M."/>
            <person name="Brinkac L.M."/>
            <person name="Beanan M.J."/>
            <person name="DeBoy R.T."/>
            <person name="Daugherty S.C."/>
            <person name="Kolonay J.F."/>
            <person name="Madupu R."/>
            <person name="Nelson W.C."/>
            <person name="White O."/>
            <person name="Peterson J.D."/>
            <person name="Khouri H.M."/>
            <person name="Hance I."/>
            <person name="Chris Lee P."/>
            <person name="Holtzapple E.K."/>
            <person name="Scanlan D."/>
            <person name="Tran K."/>
            <person name="Moazzez A."/>
            <person name="Utterback T.R."/>
            <person name="Rizzo M."/>
            <person name="Lee K."/>
            <person name="Kosack D."/>
            <person name="Moestl D."/>
            <person name="Wedler H."/>
            <person name="Lauber J."/>
            <person name="Stjepandic D."/>
            <person name="Hoheisel J."/>
            <person name="Straetz M."/>
            <person name="Heim S."/>
            <person name="Kiewitz C."/>
            <person name="Eisen J.A."/>
            <person name="Timmis K.N."/>
            <person name="Duesterhoeft A."/>
            <person name="Tuemmler B."/>
            <person name="Fraser C.M."/>
        </authorList>
    </citation>
    <scope>NUCLEOTIDE SEQUENCE [LARGE SCALE GENOMIC DNA]</scope>
    <source>
        <strain>ATCC 47054 / DSM 6125 / CFBP 8728 / NCIMB 11950 / KT2440</strain>
    </source>
</reference>
<gene>
    <name evidence="1" type="primary">nuoH</name>
    <name type="ordered locus">PP_4125</name>
</gene>